<accession>P19505</accession>
<accession>Q88140</accession>
<organismHost>
    <name type="scientific">Cercopithecidae</name>
    <name type="common">Old World monkeys</name>
    <dbReference type="NCBI Taxonomy" id="9527"/>
</organismHost>
<reference key="1">
    <citation type="journal article" date="1990" name="Nature">
        <title>Sequence analysis and acute pathogenicity of molecularly cloned SIVSMM-PBj14.</title>
        <authorList>
            <person name="Dewhurst S."/>
            <person name="Embretson J.E."/>
            <person name="Anderson D.C."/>
            <person name="Mullins J.I."/>
            <person name="Fultz P.N."/>
        </authorList>
    </citation>
    <scope>NUCLEOTIDE SEQUENCE [GENOMIC RNA]</scope>
</reference>
<reference key="2">
    <citation type="journal article" date="1992" name="AIDS Res. Hum. Retroviruses">
        <title>Molecular clones from a non-acutely pathogenic derivative of SIVsmmPBj14: characterization and comparison to acutely pathogenic clones.</title>
        <authorList>
            <person name="Dewhurst S."/>
            <person name="Embretson J.E."/>
            <person name="Fultz P.N."/>
            <person name="Mullins J.I."/>
        </authorList>
    </citation>
    <scope>NUCLEOTIDE SEQUENCE [GENOMIC RNA]</scope>
</reference>
<keyword id="KW-0002">3D-structure</keyword>
<keyword id="KW-0064">Aspartyl protease</keyword>
<keyword id="KW-0167">Capsid protein</keyword>
<keyword id="KW-0229">DNA integration</keyword>
<keyword id="KW-0233">DNA recombination</keyword>
<keyword id="KW-0238">DNA-binding</keyword>
<keyword id="KW-0239">DNA-directed DNA polymerase</keyword>
<keyword id="KW-0255">Endonuclease</keyword>
<keyword id="KW-1262">Eukaryotic host gene expression shutoff by virus</keyword>
<keyword id="KW-1193">Eukaryotic host translation shutoff by virus</keyword>
<keyword id="KW-1032">Host cell membrane</keyword>
<keyword id="KW-1035">Host cytoplasm</keyword>
<keyword id="KW-1190">Host gene expression shutoff by virus</keyword>
<keyword id="KW-1043">Host membrane</keyword>
<keyword id="KW-1048">Host nucleus</keyword>
<keyword id="KW-0945">Host-virus interaction</keyword>
<keyword id="KW-0378">Hydrolase</keyword>
<keyword id="KW-0449">Lipoprotein</keyword>
<keyword id="KW-0460">Magnesium</keyword>
<keyword id="KW-0472">Membrane</keyword>
<keyword id="KW-0479">Metal-binding</keyword>
<keyword id="KW-0511">Multifunctional enzyme</keyword>
<keyword id="KW-0519">Myristate</keyword>
<keyword id="KW-0540">Nuclease</keyword>
<keyword id="KW-0548">Nucleotidyltransferase</keyword>
<keyword id="KW-0597">Phosphoprotein</keyword>
<keyword id="KW-0645">Protease</keyword>
<keyword id="KW-0677">Repeat</keyword>
<keyword id="KW-0688">Ribosomal frameshifting</keyword>
<keyword id="KW-0694">RNA-binding</keyword>
<keyword id="KW-0695">RNA-directed DNA polymerase</keyword>
<keyword id="KW-0808">Transferase</keyword>
<keyword id="KW-1179">Viral genome integration</keyword>
<keyword id="KW-0543">Viral nucleoprotein</keyword>
<keyword id="KW-1163">Viral penetration into host nucleus</keyword>
<keyword id="KW-1188">Viral release from host cell</keyword>
<keyword id="KW-0946">Virion</keyword>
<keyword id="KW-0917">Virion maturation</keyword>
<keyword id="KW-1160">Virus entry into host cell</keyword>
<keyword id="KW-0862">Zinc</keyword>
<keyword id="KW-0863">Zinc-finger</keyword>
<evidence type="ECO:0000250" key="1"/>
<evidence type="ECO:0000250" key="2">
    <source>
        <dbReference type="UniProtKB" id="P03366"/>
    </source>
</evidence>
<evidence type="ECO:0000250" key="3">
    <source>
        <dbReference type="UniProtKB" id="P03367"/>
    </source>
</evidence>
<evidence type="ECO:0000250" key="4">
    <source>
        <dbReference type="UniProtKB" id="P04585"/>
    </source>
</evidence>
<evidence type="ECO:0000250" key="5">
    <source>
        <dbReference type="UniProtKB" id="P04591"/>
    </source>
</evidence>
<evidence type="ECO:0000250" key="6">
    <source>
        <dbReference type="UniProtKB" id="P12493"/>
    </source>
</evidence>
<evidence type="ECO:0000250" key="7">
    <source>
        <dbReference type="UniProtKB" id="P12497"/>
    </source>
</evidence>
<evidence type="ECO:0000255" key="8"/>
<evidence type="ECO:0000255" key="9">
    <source>
        <dbReference type="PROSITE-ProRule" id="PRU00047"/>
    </source>
</evidence>
<evidence type="ECO:0000255" key="10">
    <source>
        <dbReference type="PROSITE-ProRule" id="PRU00275"/>
    </source>
</evidence>
<evidence type="ECO:0000255" key="11">
    <source>
        <dbReference type="PROSITE-ProRule" id="PRU00405"/>
    </source>
</evidence>
<evidence type="ECO:0000255" key="12">
    <source>
        <dbReference type="PROSITE-ProRule" id="PRU00408"/>
    </source>
</evidence>
<evidence type="ECO:0000255" key="13">
    <source>
        <dbReference type="PROSITE-ProRule" id="PRU00450"/>
    </source>
</evidence>
<evidence type="ECO:0000255" key="14">
    <source>
        <dbReference type="PROSITE-ProRule" id="PRU00457"/>
    </source>
</evidence>
<evidence type="ECO:0000255" key="15">
    <source>
        <dbReference type="PROSITE-ProRule" id="PRU00506"/>
    </source>
</evidence>
<evidence type="ECO:0000255" key="16">
    <source>
        <dbReference type="PROSITE-ProRule" id="PRU10094"/>
    </source>
</evidence>
<evidence type="ECO:0000256" key="17">
    <source>
        <dbReference type="SAM" id="MobiDB-lite"/>
    </source>
</evidence>
<evidence type="ECO:0000305" key="18"/>
<sequence length="1449" mass="163326">MGARNSVLSGKKADELEKIRLRPGGKKRYQLKHIVWAANELDRFGLAESLLENKEGCQKILSVLAPLVPTGSENLKSLYNTVCVLWCIHAEEKVKHTEEAKQIVQRHLVVETGTADKMPATSRPTAPPSGKGGNYPVQQIGGNYTHLPLSPRTLNAWVKLIEEKKFGAEVVPGFQALSEGCTPYDINQMLNCVGEHQAAMQIIREIINEEAADWDLQHPQPGPIPPGQLREPRGSDIAGTTSTVDEQIQWMYRQQNPIPVGNIYRRWIQLGLQKCVRMYNPTNILDVKQGPKEPFQSYVDRFYKSLRAEQTDPAVKNWMTQTLLIQNANPDCKLVLKGLGINPTLEEMLTACQGVGGPGQKARLMAEALKDALTQGPLPFAAVQQKGQRKIIKCWNCGKEGHSARQCRAPRRQGCWKCGKAGHVMAKCPERQAGFFRAWPMGKEAPQFPHGPDASGADTNCSPRGSSCGSTEELHEDGQKAEGEQRETLQGGNGGFAAPQFSLWRRPIVTAYIEEQPVEVLLDTGADDSIVAGIELGPNYTPKIVGGIGGFINTKEYKDVKIKVLGKVIKGTIMTGDTPINIFGRNLLTAMGMSLNLPIAKVEPIKVTLKPGKDGPKLRQWPLSKEKIIALREICEKMEKDGQLEEAPPTNPYNTPTFAIKKKDKNKWRMLIDFRELNKVTQDFTEVQLGIPHPAGLAKRRRITVLDVGDAYFSIPLDEEFRQYTAFTLPSVNNAEPGKRYIYKVLPQGWKGSPAIFQHTMRNVLEPFRKANPDVTLIQYMDDILIASDRTDLEHDRVVLQLKELLNSIGFSTPEEKFQKDPPFQWMGYELWPTKWKLQKIELPQRETWTVNDIQKLVGVLNWAAQIYPGIKTKHLCRLIRGKMTLTEEVQWTEMAEAEYEENKIILSQEQEGCYYQEGKPLEATVIKSQDNQWSYKIHQEDKILKVGKFAKIKNTHTNGVRLLAHVVQKIGKEAIVIWGQVPRFHLPVEREIWEQWWTDYWQVTWIPEWDFVSTPPLVRLVFNLVKEPIQGAETFYVDGSCNRQSREGKAGYVTDRGRDKAKLLEQTTNQQAELEAFYLALADSGPKANIIVDSQYVMGIVAGQPTESESRLVNQIIEEMIKKEAIYVAWVPAHKGIGGNQEVDHLVSQGIRQVLFLEKIEPAQEEHEKYHSNVKELVFKFGLPRLVAKQIVDTCDKCHQKGEAIHGQVNAELGTWQMDCTHLEGKIIIVAVHVASGFIEAEVIPQETGRQTALFLLKLASRWPITHLHTDNGANFTSQEVKMVAWWAGIEQTFGVPYNPQSQGVVEAMNHHLKTQIDRIREQANSIETIVLMAVHCMNFKRRGGIGDMTPAERLVNMITTEQEIQFQQSKNSKFKNFRVYYREGRDQLWKGPGELLWKGEGAVILKVGTEIKVVPRRKAKIIKDYGGGKELDSGSHLEDTGEAREVA</sequence>
<name>POL_SIVSP</name>
<organism>
    <name type="scientific">Simian immunodeficiency virus (isolate PBj14/BCL-3)</name>
    <name type="common">SIV-sm</name>
    <name type="synonym">Simian immunodeficiency virus sooty mangabey monkey</name>
    <dbReference type="NCBI Taxonomy" id="11738"/>
    <lineage>
        <taxon>Viruses</taxon>
        <taxon>Riboviria</taxon>
        <taxon>Pararnavirae</taxon>
        <taxon>Artverviricota</taxon>
        <taxon>Revtraviricetes</taxon>
        <taxon>Ortervirales</taxon>
        <taxon>Retroviridae</taxon>
        <taxon>Orthoretrovirinae</taxon>
        <taxon>Lentivirus</taxon>
        <taxon>Simian immunodeficiency virus</taxon>
    </lineage>
</organism>
<gene>
    <name type="primary">gag-pol</name>
</gene>
<feature type="initiator methionine" description="Removed; by host" evidence="1">
    <location>
        <position position="1"/>
    </location>
</feature>
<feature type="chain" id="PRO_0000306065" description="Gag-Pol polyprotein">
    <location>
        <begin position="2"/>
        <end position="1449"/>
    </location>
</feature>
<feature type="chain" id="PRO_0000306066" description="Matrix protein p17" evidence="1">
    <location>
        <begin position="2"/>
        <end position="135"/>
    </location>
</feature>
<feature type="chain" id="PRO_0000306067" description="Capsid protein p24" evidence="1">
    <location>
        <begin position="136"/>
        <end position="365"/>
    </location>
</feature>
<feature type="chain" id="PRO_0000306068" description="Nucleocapsid protein p7" evidence="1">
    <location>
        <begin position="366"/>
        <end position="434"/>
    </location>
</feature>
<feature type="chain" id="PRO_0000306069" description="p6-pol" evidence="8">
    <location>
        <begin position="435"/>
        <end position="501"/>
    </location>
</feature>
<feature type="chain" id="PRO_0000306070" description="Protease" evidence="1">
    <location>
        <begin position="502"/>
        <end position="597"/>
    </location>
</feature>
<feature type="chain" id="PRO_0000306071" description="Reverse transcriptase/ribonuclease H" evidence="1">
    <location>
        <begin position="598"/>
        <end position="1156"/>
    </location>
</feature>
<feature type="chain" id="PRO_0000306072" description="p51 RT" evidence="1">
    <location>
        <begin position="598"/>
        <end position="1036"/>
    </location>
</feature>
<feature type="chain" id="PRO_0000306073" description="p15" evidence="1">
    <location>
        <begin position="1037"/>
        <end position="1156"/>
    </location>
</feature>
<feature type="chain" id="PRO_0000306074" description="Integrase" evidence="1">
    <location>
        <begin position="1157"/>
        <end position="1449"/>
    </location>
</feature>
<feature type="domain" description="Peptidase A2" evidence="10">
    <location>
        <begin position="518"/>
        <end position="587"/>
    </location>
</feature>
<feature type="domain" description="Reverse transcriptase" evidence="11">
    <location>
        <begin position="641"/>
        <end position="831"/>
    </location>
</feature>
<feature type="domain" description="RNase H type-1" evidence="12">
    <location>
        <begin position="1030"/>
        <end position="1153"/>
    </location>
</feature>
<feature type="domain" description="Integrase catalytic" evidence="14">
    <location>
        <begin position="1210"/>
        <end position="1360"/>
    </location>
</feature>
<feature type="zinc finger region" description="CCHC-type 1" evidence="9">
    <location>
        <begin position="392"/>
        <end position="409"/>
    </location>
</feature>
<feature type="zinc finger region" description="CCHC-type 2" evidence="9">
    <location>
        <begin position="413"/>
        <end position="430"/>
    </location>
</feature>
<feature type="zinc finger region" description="Integrase-type" evidence="13">
    <location>
        <begin position="1159"/>
        <end position="1200"/>
    </location>
</feature>
<feature type="DNA-binding region" description="Integrase-type" evidence="15">
    <location>
        <begin position="1379"/>
        <end position="1426"/>
    </location>
</feature>
<feature type="region of interest" description="Disordered" evidence="17">
    <location>
        <begin position="442"/>
        <end position="494"/>
    </location>
</feature>
<feature type="region of interest" description="RT 'primer grip'" evidence="1">
    <location>
        <begin position="824"/>
        <end position="832"/>
    </location>
</feature>
<feature type="short sequence motif" description="Nuclear export signal" evidence="1">
    <location>
        <begin position="16"/>
        <end position="22"/>
    </location>
</feature>
<feature type="short sequence motif" description="Nuclear localization signal" evidence="1">
    <location>
        <begin position="26"/>
        <end position="32"/>
    </location>
</feature>
<feature type="short sequence motif" description="Tryptophan repeat motif" evidence="1">
    <location>
        <begin position="994"/>
        <end position="1010"/>
    </location>
</feature>
<feature type="compositionally biased region" description="Polar residues" evidence="17">
    <location>
        <begin position="457"/>
        <end position="470"/>
    </location>
</feature>
<feature type="compositionally biased region" description="Basic and acidic residues" evidence="17">
    <location>
        <begin position="472"/>
        <end position="487"/>
    </location>
</feature>
<feature type="active site" description="For protease activity; shared with dimeric partner" evidence="16">
    <location>
        <position position="523"/>
    </location>
</feature>
<feature type="binding site" evidence="1">
    <location>
        <position position="707"/>
    </location>
    <ligand>
        <name>Mg(2+)</name>
        <dbReference type="ChEBI" id="CHEBI:18420"/>
        <label>1</label>
        <note>catalytic; for reverse transcriptase activity</note>
    </ligand>
</feature>
<feature type="binding site" evidence="1">
    <location>
        <position position="782"/>
    </location>
    <ligand>
        <name>Mg(2+)</name>
        <dbReference type="ChEBI" id="CHEBI:18420"/>
        <label>1</label>
        <note>catalytic; for reverse transcriptase activity</note>
    </ligand>
</feature>
<feature type="binding site" evidence="1">
    <location>
        <position position="783"/>
    </location>
    <ligand>
        <name>Mg(2+)</name>
        <dbReference type="ChEBI" id="CHEBI:18420"/>
        <label>1</label>
        <note>catalytic; for reverse transcriptase activity</note>
    </ligand>
</feature>
<feature type="binding site" evidence="1">
    <location>
        <position position="1039"/>
    </location>
    <ligand>
        <name>Mg(2+)</name>
        <dbReference type="ChEBI" id="CHEBI:18420"/>
        <label>2</label>
        <note>catalytic; for RNase H activity</note>
    </ligand>
</feature>
<feature type="binding site" evidence="1">
    <location>
        <position position="1074"/>
    </location>
    <ligand>
        <name>Mg(2+)</name>
        <dbReference type="ChEBI" id="CHEBI:18420"/>
        <label>2</label>
        <note>catalytic; for RNase H activity</note>
    </ligand>
</feature>
<feature type="binding site" evidence="1">
    <location>
        <position position="1094"/>
    </location>
    <ligand>
        <name>Mg(2+)</name>
        <dbReference type="ChEBI" id="CHEBI:18420"/>
        <label>2</label>
        <note>catalytic; for RNase H activity</note>
    </ligand>
</feature>
<feature type="binding site" evidence="1">
    <location>
        <position position="1145"/>
    </location>
    <ligand>
        <name>Mg(2+)</name>
        <dbReference type="ChEBI" id="CHEBI:18420"/>
        <label>2</label>
        <note>catalytic; for RNase H activity</note>
    </ligand>
</feature>
<feature type="binding site" evidence="13">
    <location>
        <position position="1168"/>
    </location>
    <ligand>
        <name>Zn(2+)</name>
        <dbReference type="ChEBI" id="CHEBI:29105"/>
    </ligand>
</feature>
<feature type="binding site" evidence="13">
    <location>
        <position position="1172"/>
    </location>
    <ligand>
        <name>Zn(2+)</name>
        <dbReference type="ChEBI" id="CHEBI:29105"/>
    </ligand>
</feature>
<feature type="binding site" evidence="13">
    <location>
        <position position="1196"/>
    </location>
    <ligand>
        <name>Zn(2+)</name>
        <dbReference type="ChEBI" id="CHEBI:29105"/>
    </ligand>
</feature>
<feature type="binding site" evidence="13">
    <location>
        <position position="1199"/>
    </location>
    <ligand>
        <name>Zn(2+)</name>
        <dbReference type="ChEBI" id="CHEBI:29105"/>
    </ligand>
</feature>
<feature type="binding site" evidence="1">
    <location>
        <position position="1220"/>
    </location>
    <ligand>
        <name>Mg(2+)</name>
        <dbReference type="ChEBI" id="CHEBI:18420"/>
        <label>3</label>
        <note>catalytic; for integrase activity</note>
    </ligand>
</feature>
<feature type="binding site" evidence="1">
    <location>
        <position position="1272"/>
    </location>
    <ligand>
        <name>Mg(2+)</name>
        <dbReference type="ChEBI" id="CHEBI:18420"/>
        <label>3</label>
        <note>catalytic; for integrase activity</note>
    </ligand>
</feature>
<feature type="site" description="Cleavage; by viral protease" evidence="1">
    <location>
        <begin position="135"/>
        <end position="136"/>
    </location>
</feature>
<feature type="site" description="Cis/trans isomerization of proline peptide bond; by human PPIA/CYPA" evidence="1">
    <location>
        <begin position="222"/>
        <end position="223"/>
    </location>
</feature>
<feature type="site" description="Cleavage; by viral protease" evidence="1">
    <location>
        <begin position="365"/>
        <end position="366"/>
    </location>
</feature>
<feature type="site" description="Cleavage; by viral protease" evidence="1">
    <location>
        <begin position="434"/>
        <end position="435"/>
    </location>
</feature>
<feature type="site" description="Cleavage; by viral protease" evidence="1">
    <location>
        <begin position="501"/>
        <end position="502"/>
    </location>
</feature>
<feature type="site" description="Cleavage; by viral protease" evidence="1">
    <location>
        <begin position="597"/>
        <end position="598"/>
    </location>
</feature>
<feature type="site" description="Essential for RT p66/p51 heterodimerization" evidence="1">
    <location>
        <position position="997"/>
    </location>
</feature>
<feature type="site" description="Essential for RT p66/p51 heterodimerization" evidence="1">
    <location>
        <position position="1010"/>
    </location>
</feature>
<feature type="site" description="Cleavage; by viral protease" evidence="1">
    <location>
        <begin position="1036"/>
        <end position="1037"/>
    </location>
</feature>
<feature type="site" description="Cleavage; by viral protease" evidence="1">
    <location>
        <begin position="1156"/>
        <end position="1157"/>
    </location>
</feature>
<feature type="lipid moiety-binding region" description="N-myristoyl glycine; by host" evidence="1">
    <location>
        <position position="2"/>
    </location>
</feature>
<protein>
    <recommendedName>
        <fullName>Gag-Pol polyprotein</fullName>
    </recommendedName>
    <alternativeName>
        <fullName>Pr160Gag-Pol</fullName>
    </alternativeName>
    <component>
        <recommendedName>
            <fullName>Matrix protein p17</fullName>
            <shortName>MA</shortName>
        </recommendedName>
    </component>
    <component>
        <recommendedName>
            <fullName>Capsid protein p24</fullName>
            <shortName>CA</shortName>
        </recommendedName>
    </component>
    <component>
        <recommendedName>
            <fullName>Nucleocapsid protein p7</fullName>
            <shortName>NC</shortName>
        </recommendedName>
    </component>
    <component>
        <recommendedName>
            <fullName>p6-pol</fullName>
            <shortName>p6*</shortName>
        </recommendedName>
    </component>
    <component>
        <recommendedName>
            <fullName>Protease</fullName>
            <ecNumber>3.4.23.16</ecNumber>
        </recommendedName>
        <alternativeName>
            <fullName>PR</fullName>
        </alternativeName>
        <alternativeName>
            <fullName>Retropepsin</fullName>
        </alternativeName>
    </component>
    <component>
        <recommendedName>
            <fullName>Reverse transcriptase/ribonuclease H</fullName>
            <ecNumber>2.7.7.49</ecNumber>
            <ecNumber>2.7.7.7</ecNumber>
            <ecNumber>3.1.26.13</ecNumber>
        </recommendedName>
        <alternativeName>
            <fullName>Exoribonuclease H</fullName>
            <ecNumber>3.1.13.2</ecNumber>
        </alternativeName>
        <alternativeName>
            <fullName>p66 RT</fullName>
        </alternativeName>
    </component>
    <component>
        <recommendedName>
            <fullName>p51 RT</fullName>
        </recommendedName>
    </component>
    <component>
        <recommendedName>
            <fullName>p15</fullName>
        </recommendedName>
    </component>
    <component>
        <recommendedName>
            <fullName>Integrase</fullName>
            <shortName>IN</shortName>
            <ecNumber evidence="4">2.7.7.-</ecNumber>
            <ecNumber evidence="4">3.1.-.-</ecNumber>
        </recommendedName>
    </component>
</protein>
<dbReference type="EC" id="3.4.23.16"/>
<dbReference type="EC" id="2.7.7.49"/>
<dbReference type="EC" id="2.7.7.7"/>
<dbReference type="EC" id="3.1.26.13"/>
<dbReference type="EC" id="3.1.13.2"/>
<dbReference type="EC" id="2.7.7.-" evidence="4"/>
<dbReference type="EC" id="3.1.-.-" evidence="4"/>
<dbReference type="EMBL" id="M31325">
    <property type="protein sequence ID" value="AAA47753.1"/>
    <property type="molecule type" value="Genomic_RNA"/>
</dbReference>
<dbReference type="EMBL" id="L03298">
    <property type="protein sequence ID" value="AAA47777.1"/>
    <property type="molecule type" value="Genomic_RNA"/>
</dbReference>
<dbReference type="PDB" id="3JTS">
    <property type="method" value="X-ray"/>
    <property type="resolution" value="2.80 A"/>
    <property type="chains" value="C/F/I=71-79"/>
</dbReference>
<dbReference type="PDBsum" id="3JTS"/>
<dbReference type="SMR" id="P19505"/>
<dbReference type="EvolutionaryTrace" id="P19505"/>
<dbReference type="PRO" id="PR:P19505"/>
<dbReference type="Proteomes" id="UP000007221">
    <property type="component" value="Segment"/>
</dbReference>
<dbReference type="GO" id="GO:0043657">
    <property type="term" value="C:host cell"/>
    <property type="evidence" value="ECO:0007669"/>
    <property type="project" value="GOC"/>
</dbReference>
<dbReference type="GO" id="GO:0030430">
    <property type="term" value="C:host cell cytoplasm"/>
    <property type="evidence" value="ECO:0007669"/>
    <property type="project" value="UniProtKB-SubCell"/>
</dbReference>
<dbReference type="GO" id="GO:0042025">
    <property type="term" value="C:host cell nucleus"/>
    <property type="evidence" value="ECO:0007669"/>
    <property type="project" value="UniProtKB-SubCell"/>
</dbReference>
<dbReference type="GO" id="GO:0020002">
    <property type="term" value="C:host cell plasma membrane"/>
    <property type="evidence" value="ECO:0007669"/>
    <property type="project" value="UniProtKB-SubCell"/>
</dbReference>
<dbReference type="GO" id="GO:0016020">
    <property type="term" value="C:membrane"/>
    <property type="evidence" value="ECO:0007669"/>
    <property type="project" value="UniProtKB-KW"/>
</dbReference>
<dbReference type="GO" id="GO:0019013">
    <property type="term" value="C:viral nucleocapsid"/>
    <property type="evidence" value="ECO:0007669"/>
    <property type="project" value="UniProtKB-KW"/>
</dbReference>
<dbReference type="GO" id="GO:0004190">
    <property type="term" value="F:aspartic-type endopeptidase activity"/>
    <property type="evidence" value="ECO:0007669"/>
    <property type="project" value="UniProtKB-KW"/>
</dbReference>
<dbReference type="GO" id="GO:0003677">
    <property type="term" value="F:DNA binding"/>
    <property type="evidence" value="ECO:0007669"/>
    <property type="project" value="UniProtKB-KW"/>
</dbReference>
<dbReference type="GO" id="GO:0003887">
    <property type="term" value="F:DNA-directed DNA polymerase activity"/>
    <property type="evidence" value="ECO:0007669"/>
    <property type="project" value="UniProtKB-KW"/>
</dbReference>
<dbReference type="GO" id="GO:0004533">
    <property type="term" value="F:exoribonuclease H activity"/>
    <property type="evidence" value="ECO:0007669"/>
    <property type="project" value="UniProtKB-EC"/>
</dbReference>
<dbReference type="GO" id="GO:0035613">
    <property type="term" value="F:RNA stem-loop binding"/>
    <property type="evidence" value="ECO:0007669"/>
    <property type="project" value="TreeGrafter"/>
</dbReference>
<dbReference type="GO" id="GO:0003964">
    <property type="term" value="F:RNA-directed DNA polymerase activity"/>
    <property type="evidence" value="ECO:0007669"/>
    <property type="project" value="UniProtKB-KW"/>
</dbReference>
<dbReference type="GO" id="GO:0004523">
    <property type="term" value="F:RNA-DNA hybrid ribonuclease activity"/>
    <property type="evidence" value="ECO:0007669"/>
    <property type="project" value="InterPro"/>
</dbReference>
<dbReference type="GO" id="GO:0005198">
    <property type="term" value="F:structural molecule activity"/>
    <property type="evidence" value="ECO:0007669"/>
    <property type="project" value="InterPro"/>
</dbReference>
<dbReference type="GO" id="GO:0008270">
    <property type="term" value="F:zinc ion binding"/>
    <property type="evidence" value="ECO:0007669"/>
    <property type="project" value="UniProtKB-KW"/>
</dbReference>
<dbReference type="GO" id="GO:0015074">
    <property type="term" value="P:DNA integration"/>
    <property type="evidence" value="ECO:0007669"/>
    <property type="project" value="UniProtKB-KW"/>
</dbReference>
<dbReference type="GO" id="GO:0006310">
    <property type="term" value="P:DNA recombination"/>
    <property type="evidence" value="ECO:0007669"/>
    <property type="project" value="UniProtKB-KW"/>
</dbReference>
<dbReference type="GO" id="GO:0075713">
    <property type="term" value="P:establishment of integrated proviral latency"/>
    <property type="evidence" value="ECO:0007669"/>
    <property type="project" value="UniProtKB-KW"/>
</dbReference>
<dbReference type="GO" id="GO:0006508">
    <property type="term" value="P:proteolysis"/>
    <property type="evidence" value="ECO:0007669"/>
    <property type="project" value="UniProtKB-KW"/>
</dbReference>
<dbReference type="GO" id="GO:0046718">
    <property type="term" value="P:symbiont entry into host cell"/>
    <property type="evidence" value="ECO:0007669"/>
    <property type="project" value="UniProtKB-KW"/>
</dbReference>
<dbReference type="GO" id="GO:0039657">
    <property type="term" value="P:symbiont-mediated suppression of host gene expression"/>
    <property type="evidence" value="ECO:0007669"/>
    <property type="project" value="UniProtKB-KW"/>
</dbReference>
<dbReference type="GO" id="GO:0044826">
    <property type="term" value="P:viral genome integration into host DNA"/>
    <property type="evidence" value="ECO:0007669"/>
    <property type="project" value="UniProtKB-KW"/>
</dbReference>
<dbReference type="GO" id="GO:0075732">
    <property type="term" value="P:viral penetration into host nucleus"/>
    <property type="evidence" value="ECO:0007669"/>
    <property type="project" value="UniProtKB-KW"/>
</dbReference>
<dbReference type="GO" id="GO:0075523">
    <property type="term" value="P:viral translational frameshifting"/>
    <property type="evidence" value="ECO:0007669"/>
    <property type="project" value="UniProtKB-KW"/>
</dbReference>
<dbReference type="CDD" id="cd05482">
    <property type="entry name" value="HIV_retropepsin_like"/>
    <property type="match status" value="1"/>
</dbReference>
<dbReference type="Gene3D" id="1.10.10.200">
    <property type="match status" value="1"/>
</dbReference>
<dbReference type="Gene3D" id="1.10.1200.30">
    <property type="match status" value="1"/>
</dbReference>
<dbReference type="Gene3D" id="3.30.70.270">
    <property type="match status" value="3"/>
</dbReference>
<dbReference type="Gene3D" id="2.40.70.10">
    <property type="entry name" value="Acid Proteases"/>
    <property type="match status" value="1"/>
</dbReference>
<dbReference type="Gene3D" id="3.10.10.10">
    <property type="entry name" value="HIV Type 1 Reverse Transcriptase, subunit A, domain 1"/>
    <property type="match status" value="1"/>
</dbReference>
<dbReference type="Gene3D" id="1.10.375.10">
    <property type="entry name" value="Human Immunodeficiency Virus Type 1 Capsid Protein"/>
    <property type="match status" value="1"/>
</dbReference>
<dbReference type="Gene3D" id="1.10.150.90">
    <property type="entry name" value="Immunodeficiency lentiviruses, gag gene matrix protein p17"/>
    <property type="match status" value="1"/>
</dbReference>
<dbReference type="Gene3D" id="2.30.30.10">
    <property type="entry name" value="Integrase, C-terminal domain superfamily, retroviral"/>
    <property type="match status" value="1"/>
</dbReference>
<dbReference type="Gene3D" id="3.30.420.10">
    <property type="entry name" value="Ribonuclease H-like superfamily/Ribonuclease H"/>
    <property type="match status" value="2"/>
</dbReference>
<dbReference type="Gene3D" id="1.20.5.760">
    <property type="entry name" value="Single helix bin"/>
    <property type="match status" value="1"/>
</dbReference>
<dbReference type="Gene3D" id="4.10.60.10">
    <property type="entry name" value="Zinc finger, CCHC-type"/>
    <property type="match status" value="1"/>
</dbReference>
<dbReference type="InterPro" id="IPR001969">
    <property type="entry name" value="Aspartic_peptidase_AS"/>
</dbReference>
<dbReference type="InterPro" id="IPR043502">
    <property type="entry name" value="DNA/RNA_pol_sf"/>
</dbReference>
<dbReference type="InterPro" id="IPR045345">
    <property type="entry name" value="Gag_p24_C"/>
</dbReference>
<dbReference type="InterPro" id="IPR017856">
    <property type="entry name" value="Integrase-like_N"/>
</dbReference>
<dbReference type="InterPro" id="IPR036862">
    <property type="entry name" value="Integrase_C_dom_sf_retrovir"/>
</dbReference>
<dbReference type="InterPro" id="IPR001037">
    <property type="entry name" value="Integrase_C_retrovir"/>
</dbReference>
<dbReference type="InterPro" id="IPR001584">
    <property type="entry name" value="Integrase_cat-core"/>
</dbReference>
<dbReference type="InterPro" id="IPR003308">
    <property type="entry name" value="Integrase_Zn-bd_dom_N"/>
</dbReference>
<dbReference type="InterPro" id="IPR000071">
    <property type="entry name" value="Lentvrl_matrix_N"/>
</dbReference>
<dbReference type="InterPro" id="IPR012344">
    <property type="entry name" value="Matrix_HIV/RSV_N"/>
</dbReference>
<dbReference type="InterPro" id="IPR001995">
    <property type="entry name" value="Peptidase_A2_cat"/>
</dbReference>
<dbReference type="InterPro" id="IPR021109">
    <property type="entry name" value="Peptidase_aspartic_dom_sf"/>
</dbReference>
<dbReference type="InterPro" id="IPR034170">
    <property type="entry name" value="Retropepsin-like_cat_dom"/>
</dbReference>
<dbReference type="InterPro" id="IPR018061">
    <property type="entry name" value="Retropepsins"/>
</dbReference>
<dbReference type="InterPro" id="IPR008916">
    <property type="entry name" value="Retrov_capsid_C"/>
</dbReference>
<dbReference type="InterPro" id="IPR008919">
    <property type="entry name" value="Retrov_capsid_N"/>
</dbReference>
<dbReference type="InterPro" id="IPR010999">
    <property type="entry name" value="Retrovr_matrix"/>
</dbReference>
<dbReference type="InterPro" id="IPR043128">
    <property type="entry name" value="Rev_trsase/Diguanyl_cyclase"/>
</dbReference>
<dbReference type="InterPro" id="IPR012337">
    <property type="entry name" value="RNaseH-like_sf"/>
</dbReference>
<dbReference type="InterPro" id="IPR002156">
    <property type="entry name" value="RNaseH_domain"/>
</dbReference>
<dbReference type="InterPro" id="IPR036397">
    <property type="entry name" value="RNaseH_sf"/>
</dbReference>
<dbReference type="InterPro" id="IPR000477">
    <property type="entry name" value="RT_dom"/>
</dbReference>
<dbReference type="InterPro" id="IPR010659">
    <property type="entry name" value="RVT_connect"/>
</dbReference>
<dbReference type="InterPro" id="IPR010661">
    <property type="entry name" value="RVT_thumb"/>
</dbReference>
<dbReference type="InterPro" id="IPR001878">
    <property type="entry name" value="Znf_CCHC"/>
</dbReference>
<dbReference type="InterPro" id="IPR036875">
    <property type="entry name" value="Znf_CCHC_sf"/>
</dbReference>
<dbReference type="PANTHER" id="PTHR41694">
    <property type="entry name" value="ENDOGENOUS RETROVIRUS GROUP K MEMBER POL PROTEIN"/>
    <property type="match status" value="1"/>
</dbReference>
<dbReference type="PANTHER" id="PTHR41694:SF3">
    <property type="entry name" value="RNA-DIRECTED DNA POLYMERASE-RELATED"/>
    <property type="match status" value="1"/>
</dbReference>
<dbReference type="Pfam" id="PF00540">
    <property type="entry name" value="Gag_p17"/>
    <property type="match status" value="1"/>
</dbReference>
<dbReference type="Pfam" id="PF00607">
    <property type="entry name" value="Gag_p24"/>
    <property type="match status" value="1"/>
</dbReference>
<dbReference type="Pfam" id="PF19317">
    <property type="entry name" value="Gag_p24_C"/>
    <property type="match status" value="1"/>
</dbReference>
<dbReference type="Pfam" id="PF00552">
    <property type="entry name" value="IN_DBD_C"/>
    <property type="match status" value="1"/>
</dbReference>
<dbReference type="Pfam" id="PF02022">
    <property type="entry name" value="Integrase_Zn"/>
    <property type="match status" value="1"/>
</dbReference>
<dbReference type="Pfam" id="PF00075">
    <property type="entry name" value="RNase_H"/>
    <property type="match status" value="1"/>
</dbReference>
<dbReference type="Pfam" id="PF00665">
    <property type="entry name" value="rve"/>
    <property type="match status" value="1"/>
</dbReference>
<dbReference type="Pfam" id="PF00077">
    <property type="entry name" value="RVP"/>
    <property type="match status" value="1"/>
</dbReference>
<dbReference type="Pfam" id="PF00078">
    <property type="entry name" value="RVT_1"/>
    <property type="match status" value="1"/>
</dbReference>
<dbReference type="Pfam" id="PF06815">
    <property type="entry name" value="RVT_connect"/>
    <property type="match status" value="1"/>
</dbReference>
<dbReference type="Pfam" id="PF06817">
    <property type="entry name" value="RVT_thumb"/>
    <property type="match status" value="1"/>
</dbReference>
<dbReference type="Pfam" id="PF00098">
    <property type="entry name" value="zf-CCHC"/>
    <property type="match status" value="1"/>
</dbReference>
<dbReference type="PRINTS" id="PR00234">
    <property type="entry name" value="HIV1MATRIX"/>
</dbReference>
<dbReference type="SMART" id="SM00343">
    <property type="entry name" value="ZnF_C2HC"/>
    <property type="match status" value="2"/>
</dbReference>
<dbReference type="SUPFAM" id="SSF50630">
    <property type="entry name" value="Acid proteases"/>
    <property type="match status" value="1"/>
</dbReference>
<dbReference type="SUPFAM" id="SSF50122">
    <property type="entry name" value="DNA-binding domain of retroviral integrase"/>
    <property type="match status" value="1"/>
</dbReference>
<dbReference type="SUPFAM" id="SSF56672">
    <property type="entry name" value="DNA/RNA polymerases"/>
    <property type="match status" value="1"/>
</dbReference>
<dbReference type="SUPFAM" id="SSF46919">
    <property type="entry name" value="N-terminal Zn binding domain of HIV integrase"/>
    <property type="match status" value="1"/>
</dbReference>
<dbReference type="SUPFAM" id="SSF47836">
    <property type="entry name" value="Retroviral matrix proteins"/>
    <property type="match status" value="1"/>
</dbReference>
<dbReference type="SUPFAM" id="SSF47353">
    <property type="entry name" value="Retrovirus capsid dimerization domain-like"/>
    <property type="match status" value="1"/>
</dbReference>
<dbReference type="SUPFAM" id="SSF47943">
    <property type="entry name" value="Retrovirus capsid protein, N-terminal core domain"/>
    <property type="match status" value="1"/>
</dbReference>
<dbReference type="SUPFAM" id="SSF57756">
    <property type="entry name" value="Retrovirus zinc finger-like domains"/>
    <property type="match status" value="1"/>
</dbReference>
<dbReference type="SUPFAM" id="SSF53098">
    <property type="entry name" value="Ribonuclease H-like"/>
    <property type="match status" value="2"/>
</dbReference>
<dbReference type="PROSITE" id="PS50175">
    <property type="entry name" value="ASP_PROT_RETROV"/>
    <property type="match status" value="1"/>
</dbReference>
<dbReference type="PROSITE" id="PS00141">
    <property type="entry name" value="ASP_PROTEASE"/>
    <property type="match status" value="1"/>
</dbReference>
<dbReference type="PROSITE" id="PS50994">
    <property type="entry name" value="INTEGRASE"/>
    <property type="match status" value="1"/>
</dbReference>
<dbReference type="PROSITE" id="PS51027">
    <property type="entry name" value="INTEGRASE_DBD"/>
    <property type="match status" value="1"/>
</dbReference>
<dbReference type="PROSITE" id="PS50879">
    <property type="entry name" value="RNASE_H_1"/>
    <property type="match status" value="1"/>
</dbReference>
<dbReference type="PROSITE" id="PS50878">
    <property type="entry name" value="RT_POL"/>
    <property type="match status" value="1"/>
</dbReference>
<dbReference type="PROSITE" id="PS50158">
    <property type="entry name" value="ZF_CCHC"/>
    <property type="match status" value="2"/>
</dbReference>
<dbReference type="PROSITE" id="PS50876">
    <property type="entry name" value="ZF_INTEGRASE"/>
    <property type="match status" value="1"/>
</dbReference>
<comment type="function">
    <text evidence="1">Gag-Pol polyprotein and Gag polyprotein may regulate their own translation, by the binding genomic RNA in the 5'-UTR. At low concentration, Gag-Pol and Gag would promote translation, whereas at high concentration, the polyproteins encapsidate genomic RNA and then shut off translation (By similarity).</text>
</comment>
<comment type="function">
    <text evidence="1">Matrix protein p17 has two main functions: in infected cell, it targets Gag and Gag-pol polyproteins to the plasma membrane via a multipartite membrane-binding signal, that includes its myristointegration complex. The myristoylation signal and the NLS exert conflicting influences its subcellular localization. The key regulation of these motifs might be phosphorylation of a portion of MA molecules on the C-terminal tyrosine at the time of virus maturation, by virion-associated cellular tyrosine kinase. Implicated in the release from host cell mediated by Vpu (By similarity).</text>
</comment>
<comment type="function">
    <text evidence="1">Capsid protein p24 forms the conical core that encapsulates the genomic RNA-nucleocapsid complex in the virion. The core is constituted by capsid protein hexamer subunits. The core is disassembled soon after virion entry. Interaction with host PPIA/CYPA protects the virus from restriction by host TRIM5-alpha and from an unknown antiviral activity in host cells. This capsid restriction by TRIM5 is one of the factors which restricts SIV to the simian species (By similarity).</text>
</comment>
<comment type="function">
    <text evidence="1">Nucleocapsid protein p7 encapsulates and protects viral dimeric unspliced (genomic) RNA. Binds these RNAs through its zinc fingers. Facilitates rearangement of nucleic acid secondary structure during retrotranscription of genomic RNA. This capability is referred to as nucleic acid chaperone activity (By similarity).</text>
</comment>
<comment type="function">
    <text evidence="10">The aspartyl protease mediates proteolytic cleavages of Gag and Gag-Pol polyproteins during or shortly after the release of the virion from the plasma membrane. Cleavages take place as an ordered, step-wise cascade to yield mature proteins. This process is called maturation. Displays maximal activity during the budding process just prior to particle release from the cell. Also cleaves Nef and Vif, probably concomitantly with viral structural proteins on maturation of virus particles. Hydrolyzes host EIF4GI and PABP1 in order to shut off the capped cellular mRNA translation. The resulting inhibition of cellular protein synthesis serves to ensure maximal viral gene expression and to evade host immune response (By similarity).</text>
</comment>
<comment type="function">
    <text evidence="1">Reverse transcriptase/ribonuclease H (RT) is a multifunctional enzyme that converts the viral dimeric RNA genome into dsDNA in the cytoplasm, shortly after virus entry into the cell. This enzyme displays a DNA polymerase activity that can copy either DNA or RNA templates, and a ribonuclease H (RNase H) activity that cleaves the RNA strand of RNA-DNA heteroduplexes in a partially processive 3' to 5' endonucleasic mode. Conversion of viral genomic RNA into dsDNA requires many steps. A tRNA binds to the primer-binding site (PBS) situated at the 5'-end of the viral RNA. RT uses the 3' end of the tRNA primer to perform a short round of RNA-dependent minus-strand DNA synthesis. The reading proceeds through the U5 region and ends after the repeated (R) region which is present at both ends of viral RNA. The portion of the RNA-DNA heteroduplex is digested by the RNase H, resulting in a ssDNA product attached to the tRNA primer. This ssDNA/tRNA hybridizes with the identical R region situated at the 3' end of viral RNA. This template exchange, known as minus-strand DNA strong stop transfer, can be either intra- or intermolecular. RT uses the 3' end of this newly synthesized short ssDNA to perform the RNA-dependent minus-strand DNA synthesis of the whole template. RNase H digests the RNA template except for two polypurine tracts (PPTs) situated at the 5'-end and near the center of the genome. It is not clear if both polymerase and RNase H activities are simultaneous. RNase H can probably proceed both in a polymerase-dependent (RNA cut into small fragments by the same RT performing DNA synthesis) and a polymerase-independent mode (cleavage of remaining RNA fragments by free RTs). Secondly, RT performs DNA-directed plus-strand DNA synthesis using the PPTs that have not been removed by RNase H as primers. PPTs and tRNA primers are then removed by RNase H. The 3' and 5' ssDNA PBS regions hybridize to form a circular dsDNA intermediate. Strand displacement synthesis by RT to the PBS and PPT ends produces a blunt ended, linear dsDNA copy of the viral genome that includes long terminal repeats (LTRs) at both ends (By similarity).</text>
</comment>
<comment type="function">
    <text evidence="1">Integrase catalyzes viral DNA integration into the host chromosome, by performing a series of DNA cutting and joining reactions. This enzyme activity takes place after virion entry into a cell and reverse transcription of the RNA genome in dsDNA. The first step in the integration process is 3' processing. This step requires a complex comprising the viral genome, matrix protein, Vpr and integrase. This complex is called the pre-integration complex (PIC). The integrase protein removes 2 nucleotides from each 3' end of the viral DNA, leaving recessed CA OH's at the 3' ends. In the second step, the PIC enters cell nucleus. This process is mediated through integrase and Vpr proteins, and allows the virus to infect a non dividing cell. This ability to enter the nucleus is specific of lentiviruses, other retroviruses cannot and rely on cell division to access cell chromosomes. In the third step, termed strand transfer, the integrase protein joins the previously processed 3' ends to the 5' ends of strands of target cellular DNA at the site of integration. The 5'-ends are produced by integrase-catalyzed staggered cuts, 5 bp apart. A Y-shaped, gapped, recombination intermediate results, with the 5'-ends of the viral DNA strands and the 3' ends of target DNA strands remaining unjoined, flanking a gap of 5 bp. The last step is viral DNA integration into host chromosome. This involves host DNA repair synthesis in which the 5 bp gaps between the unjoined strands are filled in and then ligated. Since this process occurs at both cuts flanking the SIV genome, a 5 bp duplication of host DNA is produced at the ends of SIV integration. Alternatively, Integrase may catalyze the excision of viral DNA just after strand transfer, this is termed disintegration (By similarity).</text>
</comment>
<comment type="catalytic activity">
    <reaction evidence="10">
        <text>Specific for a P1 residue that is hydrophobic, and P1' variable, but often Pro.</text>
        <dbReference type="EC" id="3.4.23.16"/>
    </reaction>
</comment>
<comment type="catalytic activity">
    <reaction>
        <text>Endohydrolysis of RNA in RNA/DNA hybrids. Three different cleavage modes: 1. sequence-specific internal cleavage of RNA. Human immunodeficiency virus type 1 and Moloney murine leukemia virus enzymes prefer to cleave the RNA strand one nucleotide away from the RNA-DNA junction. 2. RNA 5'-end directed cleavage 13-19 nucleotides from the RNA end. 3. DNA 3'-end directed cleavage 15-20 nucleotides away from the primer terminus.</text>
        <dbReference type="EC" id="3.1.26.13"/>
    </reaction>
</comment>
<comment type="catalytic activity">
    <reaction>
        <text>3'-end directed exonucleolytic cleavage of viral RNA-DNA hybrid.</text>
        <dbReference type="EC" id="3.1.13.2"/>
    </reaction>
</comment>
<comment type="catalytic activity">
    <reaction evidence="11">
        <text>DNA(n) + a 2'-deoxyribonucleoside 5'-triphosphate = DNA(n+1) + diphosphate</text>
        <dbReference type="Rhea" id="RHEA:22508"/>
        <dbReference type="Rhea" id="RHEA-COMP:17339"/>
        <dbReference type="Rhea" id="RHEA-COMP:17340"/>
        <dbReference type="ChEBI" id="CHEBI:33019"/>
        <dbReference type="ChEBI" id="CHEBI:61560"/>
        <dbReference type="ChEBI" id="CHEBI:173112"/>
        <dbReference type="EC" id="2.7.7.49"/>
    </reaction>
</comment>
<comment type="catalytic activity">
    <reaction evidence="11">
        <text>DNA(n) + a 2'-deoxyribonucleoside 5'-triphosphate = DNA(n+1) + diphosphate</text>
        <dbReference type="Rhea" id="RHEA:22508"/>
        <dbReference type="Rhea" id="RHEA-COMP:17339"/>
        <dbReference type="Rhea" id="RHEA-COMP:17340"/>
        <dbReference type="ChEBI" id="CHEBI:33019"/>
        <dbReference type="ChEBI" id="CHEBI:61560"/>
        <dbReference type="ChEBI" id="CHEBI:173112"/>
        <dbReference type="EC" id="2.7.7.7"/>
    </reaction>
</comment>
<comment type="cofactor">
    <cofactor evidence="1">
        <name>Mg(2+)</name>
        <dbReference type="ChEBI" id="CHEBI:18420"/>
    </cofactor>
    <text evidence="1">Binds 2 magnesium ions for reverse transcriptase polymerase activity.</text>
</comment>
<comment type="cofactor">
    <cofactor evidence="1">
        <name>Mg(2+)</name>
        <dbReference type="ChEBI" id="CHEBI:18420"/>
    </cofactor>
    <text evidence="1">Binds 2 magnesium ions for ribonuclease H (RNase H) activity. Substrate-binding is a precondition for magnesium binding.</text>
</comment>
<comment type="cofactor">
    <cofactor evidence="1">
        <name>Mg(2+)</name>
        <dbReference type="ChEBI" id="CHEBI:18420"/>
    </cofactor>
    <text evidence="1">Magnesium ions are required for integrase activity. Binds at least 1, maybe 2 magnesium ions.</text>
</comment>
<comment type="activity regulation">
    <text>The viral protease is inhibited by many synthetic protease inhibitors (PIs), such as amprenavir, atazanavir, indinavir, loprinavir, nelfinavir, ritonavir and saquinavir. RT can be inhibited either by nucleoside RT inhibitors (NRTIs) or by non nucleoside RT inhibitors (NNRTIs). NRTIs act as chain terminators, whereas NNRTIs inhibit DNA polymerization by binding a small hydrophobic pocket near the RT active site and inducing an allosteric change in this region. Classical NRTIs are abacavir, adefovir (PMEA), didanosine (ddI), lamivudine (3TC), stavudine (d4T), tenofovir (PMPA), zalcitabine (ddC), and zidovudine (AZT). Classical NNRTIs are atevirdine (BHAP U-87201E), delavirdine, efavirenz (DMP-266), emivirine (I-EBU), and nevirapine (BI-RG-587). The tritherapies used as a basic effective treatment of AIDS associate two NRTIs and one NNRTI. Use of protease inhibitors in tritherapy regimens permit more ambitious therapeutic strategies.</text>
</comment>
<comment type="subunit">
    <molecule>Matrix protein p17</molecule>
    <text evidence="5 6">Homotrimer. Interacts with gp41 (via C-terminus).</text>
</comment>
<comment type="subunit">
    <molecule>Protease</molecule>
    <text evidence="4 7">Homodimer. The active site consists of two apposed aspartic acid residues.</text>
</comment>
<comment type="subunit">
    <molecule>Reverse transcriptase/ribonuclease H</molecule>
    <text evidence="2">Heterodimer of p66 RT and p51 RT (RT p66/p51). Heterodimerization of RT is essential for DNA polymerase activity. Despite the sequence identities, p66 RT and p51 RT have distinct folding.</text>
</comment>
<comment type="subunit">
    <molecule>Integrase</molecule>
    <text evidence="3">Homotetramer; may further associate as a homohexadecamer (By similarity).</text>
</comment>
<comment type="subcellular location">
    <molecule>Matrix protein p17</molecule>
    <subcellularLocation>
        <location evidence="18">Virion</location>
    </subcellularLocation>
    <subcellularLocation>
        <location evidence="1">Host nucleus</location>
    </subcellularLocation>
    <subcellularLocation>
        <location evidence="1">Host cytoplasm</location>
    </subcellularLocation>
    <subcellularLocation>
        <location evidence="18">Host cell membrane</location>
        <topology evidence="18">Lipid-anchor</topology>
    </subcellularLocation>
    <text evidence="1">Following virus entry, the nuclear localization signal (NLS) of the matrix protein participates with Vpr to the nuclear localization of the viral genome. During virus production, the nuclear export activity of the matrix protein counteracts the NLS to maintain the Gag and Gag-Pol polyproteins in the cytoplasm, thereby directing unspliced RNA to the plasma membrane (By similarity).</text>
</comment>
<comment type="subcellular location">
    <molecule>Capsid protein p24</molecule>
    <subcellularLocation>
        <location evidence="18">Virion</location>
    </subcellularLocation>
</comment>
<comment type="subcellular location">
    <molecule>Nucleocapsid protein p7</molecule>
    <subcellularLocation>
        <location evidence="18">Virion</location>
    </subcellularLocation>
</comment>
<comment type="subcellular location">
    <molecule>Reverse transcriptase/ribonuclease H</molecule>
    <subcellularLocation>
        <location evidence="18">Virion</location>
    </subcellularLocation>
</comment>
<comment type="subcellular location">
    <molecule>Integrase</molecule>
    <subcellularLocation>
        <location evidence="18">Virion</location>
    </subcellularLocation>
    <subcellularLocation>
        <location evidence="18">Host nucleus</location>
    </subcellularLocation>
    <subcellularLocation>
        <location evidence="18">Host cytoplasm</location>
    </subcellularLocation>
    <text evidence="18">Nuclear at initial phase, cytoplasmic at assembly.</text>
</comment>
<comment type="alternative products">
    <event type="ribosomal frameshifting"/>
    <isoform>
        <id>P19505-1</id>
        <name>Gag-Pol polyprotein</name>
        <sequence type="displayed"/>
    </isoform>
    <isoform>
        <id>P19504-1</id>
        <name>Gag polyprotein</name>
        <sequence type="external"/>
    </isoform>
    <text>Translation results in the formation of the Gag polyprotein most of the time. Ribosomal frameshifting at the gag-pol genes boundary occurs at low frequency and produces the Gag-Pol polyprotein. This strategy of translation probably allows the virus to modulate the quantity of each viral protein. Maintenance of a correct Gag to Gag-Pol ratio is essential for RNA dimerization and viral infectivity.</text>
</comment>
<comment type="domain">
    <text evidence="1">The p66 RT is structured in five subdomains: finger, palm, thumb, connection and RNase H. Within the palm subdomain, the 'primer grip' region is thought to be involved in the positioning of the primer terminus for accommodating the incoming nucleotide. The RNase H domain stabilizes the association of RT with primer-template (By similarity).</text>
</comment>
<comment type="domain">
    <text evidence="1">The tryptophan repeat motif is involved in RT p66/p51 dimerization.</text>
</comment>
<comment type="PTM">
    <text evidence="11">Specific enzymatic cleavages by the viral protease yield mature proteins. The protease is released by autocatalytic cleavage. The polyprotein is cleaved during and after budding, this process is termed maturation. Proteolytic cleavage of p66 RT removes the RNase H domain to yield the p51 RT subunit.</text>
</comment>
<comment type="PTM">
    <text>Capsid protein p24 is phosphorylated.</text>
</comment>
<comment type="miscellaneous">
    <text>The reverse transcriptase is an error-prone enzyme that lacks a proof-reading function. High mutations rate is a direct consequence of this characteristic. RT also displays frequent template switching leading to high recombination rate. Recombination mostly occurs between homologous regions of the two copackaged RNA genomes. If these two RNA molecules derive from different viral strains, reverse transcription will give rise to highly recombinated proviral DNAs.</text>
</comment>
<comment type="miscellaneous">
    <molecule>Isoform Gag-Pol polyprotein</molecule>
    <text>Produced by -1 ribosomal frameshifting.</text>
</comment>
<proteinExistence type="evidence at protein level"/>